<accession>Q65JZ6</accession>
<accession>Q62VE7</accession>
<dbReference type="EC" id="6.3.4.-" evidence="1"/>
<dbReference type="EMBL" id="AE017333">
    <property type="protein sequence ID" value="AAU40618.1"/>
    <property type="molecule type" value="Genomic_DNA"/>
</dbReference>
<dbReference type="EMBL" id="CP000002">
    <property type="protein sequence ID" value="AAU23261.1"/>
    <property type="molecule type" value="Genomic_DNA"/>
</dbReference>
<dbReference type="RefSeq" id="WP_003181516.1">
    <property type="nucleotide sequence ID" value="NC_006322.1"/>
</dbReference>
<dbReference type="SMR" id="Q65JZ6"/>
<dbReference type="STRING" id="279010.BL03002"/>
<dbReference type="KEGG" id="bld:BLi01723"/>
<dbReference type="KEGG" id="bli:BL03002"/>
<dbReference type="eggNOG" id="COG1323">
    <property type="taxonomic scope" value="Bacteria"/>
</dbReference>
<dbReference type="HOGENOM" id="CLU_038915_0_2_9"/>
<dbReference type="Proteomes" id="UP000000606">
    <property type="component" value="Chromosome"/>
</dbReference>
<dbReference type="GO" id="GO:0005737">
    <property type="term" value="C:cytoplasm"/>
    <property type="evidence" value="ECO:0007669"/>
    <property type="project" value="UniProtKB-SubCell"/>
</dbReference>
<dbReference type="GO" id="GO:0005524">
    <property type="term" value="F:ATP binding"/>
    <property type="evidence" value="ECO:0007669"/>
    <property type="project" value="UniProtKB-KW"/>
</dbReference>
<dbReference type="GO" id="GO:0016879">
    <property type="term" value="F:ligase activity, forming carbon-nitrogen bonds"/>
    <property type="evidence" value="ECO:0007669"/>
    <property type="project" value="UniProtKB-UniRule"/>
</dbReference>
<dbReference type="GO" id="GO:0000049">
    <property type="term" value="F:tRNA binding"/>
    <property type="evidence" value="ECO:0007669"/>
    <property type="project" value="UniProtKB-KW"/>
</dbReference>
<dbReference type="GO" id="GO:0006400">
    <property type="term" value="P:tRNA modification"/>
    <property type="evidence" value="ECO:0007669"/>
    <property type="project" value="UniProtKB-UniRule"/>
</dbReference>
<dbReference type="Gene3D" id="3.40.50.620">
    <property type="entry name" value="HUPs"/>
    <property type="match status" value="1"/>
</dbReference>
<dbReference type="HAMAP" id="MF_01539">
    <property type="entry name" value="TmcAL"/>
    <property type="match status" value="1"/>
</dbReference>
<dbReference type="InterPro" id="IPR014729">
    <property type="entry name" value="Rossmann-like_a/b/a_fold"/>
</dbReference>
<dbReference type="InterPro" id="IPR008513">
    <property type="entry name" value="tRNA(Met)_cyd_acetate_ligase"/>
</dbReference>
<dbReference type="NCBIfam" id="NF010191">
    <property type="entry name" value="PRK13670.1"/>
    <property type="match status" value="1"/>
</dbReference>
<dbReference type="PANTHER" id="PTHR37825">
    <property type="entry name" value="TRNA(MET) CYTIDINE ACETATE LIGASE"/>
    <property type="match status" value="1"/>
</dbReference>
<dbReference type="PANTHER" id="PTHR37825:SF1">
    <property type="entry name" value="TRNA(MET) CYTIDINE ACETATE LIGASE"/>
    <property type="match status" value="1"/>
</dbReference>
<dbReference type="Pfam" id="PF05636">
    <property type="entry name" value="HIGH_NTase1"/>
    <property type="match status" value="1"/>
</dbReference>
<dbReference type="SUPFAM" id="SSF52374">
    <property type="entry name" value="Nucleotidylyl transferase"/>
    <property type="match status" value="1"/>
</dbReference>
<proteinExistence type="inferred from homology"/>
<reference key="1">
    <citation type="journal article" date="2004" name="J. Mol. Microbiol. Biotechnol.">
        <title>The complete genome sequence of Bacillus licheniformis DSM13, an organism with great industrial potential.</title>
        <authorList>
            <person name="Veith B."/>
            <person name="Herzberg C."/>
            <person name="Steckel S."/>
            <person name="Feesche J."/>
            <person name="Maurer K.H."/>
            <person name="Ehrenreich P."/>
            <person name="Baeumer S."/>
            <person name="Henne A."/>
            <person name="Liesegang H."/>
            <person name="Merkl R."/>
            <person name="Ehrenreich A."/>
            <person name="Gottschalk G."/>
        </authorList>
    </citation>
    <scope>NUCLEOTIDE SEQUENCE [LARGE SCALE GENOMIC DNA]</scope>
    <source>
        <strain>ATCC 14580 / DSM 13 / JCM 2505 / CCUG 7422 / NBRC 12200 / NCIMB 9375 / NCTC 10341 / NRRL NRS-1264 / Gibson 46</strain>
    </source>
</reference>
<reference key="2">
    <citation type="journal article" date="2004" name="Genome Biol.">
        <title>Complete genome sequence of the industrial bacterium Bacillus licheniformis and comparisons with closely related Bacillus species.</title>
        <authorList>
            <person name="Rey M.W."/>
            <person name="Ramaiya P."/>
            <person name="Nelson B.A."/>
            <person name="Brody-Karpin S.D."/>
            <person name="Zaretsky E.J."/>
            <person name="Tang M."/>
            <person name="Lopez de Leon A."/>
            <person name="Xiang H."/>
            <person name="Gusti V."/>
            <person name="Clausen I.G."/>
            <person name="Olsen P.B."/>
            <person name="Rasmussen M.D."/>
            <person name="Andersen J.T."/>
            <person name="Joergensen P.L."/>
            <person name="Larsen T.S."/>
            <person name="Sorokin A."/>
            <person name="Bolotin A."/>
            <person name="Lapidus A."/>
            <person name="Galleron N."/>
            <person name="Ehrlich S.D."/>
            <person name="Berka R.M."/>
        </authorList>
    </citation>
    <scope>NUCLEOTIDE SEQUENCE [LARGE SCALE GENOMIC DNA]</scope>
    <source>
        <strain>ATCC 14580 / DSM 13 / JCM 2505 / CCUG 7422 / NBRC 12200 / NCIMB 9375 / NCTC 10341 / NRRL NRS-1264 / Gibson 46</strain>
    </source>
</reference>
<organism>
    <name type="scientific">Bacillus licheniformis (strain ATCC 14580 / DSM 13 / JCM 2505 / CCUG 7422 / NBRC 12200 / NCIMB 9375 / NCTC 10341 / NRRL NRS-1264 / Gibson 46)</name>
    <dbReference type="NCBI Taxonomy" id="279010"/>
    <lineage>
        <taxon>Bacteria</taxon>
        <taxon>Bacillati</taxon>
        <taxon>Bacillota</taxon>
        <taxon>Bacilli</taxon>
        <taxon>Bacillales</taxon>
        <taxon>Bacillaceae</taxon>
        <taxon>Bacillus</taxon>
    </lineage>
</organism>
<feature type="chain" id="PRO_0000147158" description="tRNA(Met) cytidine acetate ligase">
    <location>
        <begin position="1"/>
        <end position="416"/>
    </location>
</feature>
<feature type="binding site" evidence="1">
    <location>
        <begin position="7"/>
        <end position="20"/>
    </location>
    <ligand>
        <name>ATP</name>
        <dbReference type="ChEBI" id="CHEBI:30616"/>
    </ligand>
</feature>
<feature type="binding site" evidence="1">
    <location>
        <position position="101"/>
    </location>
    <ligand>
        <name>ATP</name>
        <dbReference type="ChEBI" id="CHEBI:30616"/>
    </ligand>
</feature>
<feature type="binding site" evidence="1">
    <location>
        <position position="163"/>
    </location>
    <ligand>
        <name>ATP</name>
        <dbReference type="ChEBI" id="CHEBI:30616"/>
    </ligand>
</feature>
<feature type="binding site" evidence="1">
    <location>
        <position position="188"/>
    </location>
    <ligand>
        <name>ATP</name>
        <dbReference type="ChEBI" id="CHEBI:30616"/>
    </ligand>
</feature>
<name>TMCAL_BACLD</name>
<comment type="function">
    <text evidence="1">Catalyzes the formation of N(4)-acetylcytidine (ac(4)C) at the wobble position of elongator tRNA(Met), using acetate and ATP as substrates. First activates an acetate ion to form acetyladenylate (Ac-AMP) and then transfers the acetyl group to tRNA to form ac(4)C34.</text>
</comment>
<comment type="catalytic activity">
    <reaction evidence="1">
        <text>cytidine(34) in elongator tRNA(Met) + acetate + ATP = N(4)-acetylcytidine(34) in elongator tRNA(Met) + AMP + diphosphate</text>
        <dbReference type="Rhea" id="RHEA:58144"/>
        <dbReference type="Rhea" id="RHEA-COMP:10693"/>
        <dbReference type="Rhea" id="RHEA-COMP:10694"/>
        <dbReference type="ChEBI" id="CHEBI:30089"/>
        <dbReference type="ChEBI" id="CHEBI:30616"/>
        <dbReference type="ChEBI" id="CHEBI:33019"/>
        <dbReference type="ChEBI" id="CHEBI:74900"/>
        <dbReference type="ChEBI" id="CHEBI:82748"/>
        <dbReference type="ChEBI" id="CHEBI:456215"/>
    </reaction>
</comment>
<comment type="subcellular location">
    <subcellularLocation>
        <location evidence="1">Cytoplasm</location>
    </subcellularLocation>
</comment>
<comment type="similarity">
    <text evidence="1">Belongs to the TmcAL family.</text>
</comment>
<sequence>MKAVGLVVEYNPFHNGHLYHIKEAKSETRSEVAVAVMSGSFLQRGEPAIVSKWARTKMALASFADVVVELPYIFAVQKAETFAEGAVSILNELGCSSLFFGSEHGDIEAFLNTAAHTIEHEDRLNEEARKQIAFGLSYPQAMAKAFRSVTREGGNIVDLSKPNNILGFHYVKAIMQKQLSMKPETVKRRSSGYHDSTFPEADRIASATSIRKSIFETGSLADSRFYLPKTTVDELDEYARTFGMWHSPEDYFPFLKYSLHTMDTEELKGIYEVEEGLEHRVKKAIRKAGSFKEYMELLKTKRYTWTRLQRMNTHILTKTKKADVKRMLNETHPAYIRLLGMTKKGQAYLAEKKKSLSAPLITKTGSFSHPSLQLDIKAGQVYSAPLKEPVRTMLTEQEYSLSPIRYDEDSRIFLRK</sequence>
<evidence type="ECO:0000255" key="1">
    <source>
        <dbReference type="HAMAP-Rule" id="MF_01539"/>
    </source>
</evidence>
<gene>
    <name evidence="1" type="primary">tmcAL</name>
    <name type="ordered locus">BLi01723</name>
    <name type="ordered locus">BL03002</name>
</gene>
<keyword id="KW-0067">ATP-binding</keyword>
<keyword id="KW-0963">Cytoplasm</keyword>
<keyword id="KW-0436">Ligase</keyword>
<keyword id="KW-0547">Nucleotide-binding</keyword>
<keyword id="KW-1185">Reference proteome</keyword>
<keyword id="KW-0694">RNA-binding</keyword>
<keyword id="KW-0819">tRNA processing</keyword>
<keyword id="KW-0820">tRNA-binding</keyword>
<protein>
    <recommendedName>
        <fullName evidence="1">tRNA(Met) cytidine acetate ligase</fullName>
        <ecNumber evidence="1">6.3.4.-</ecNumber>
    </recommendedName>
</protein>